<accession>Q7JV70</accession>
<comment type="function">
    <text evidence="2">Self-assembles into virion-like capsids that encapsulate RNAs and mediate intercellular RNA transfer. Arc2 protein is released from cells in extracellular vesicles that mediate the transfer of mRNA into neighboring cells.</text>
</comment>
<comment type="subunit">
    <text evidence="1">Homooligomer; homooligomerizes into virion-like capsids.</text>
</comment>
<comment type="interaction">
    <interactant intactId="EBI-172533">
        <id>Q7JV70</id>
    </interactant>
    <interactant intactId="EBI-103780">
        <id>Q7K1U0</id>
        <label>Arc1</label>
    </interactant>
    <organismsDiffer>false</organismsDiffer>
    <experiments>5</experiments>
</comment>
<comment type="interaction">
    <interactant intactId="EBI-172533">
        <id>Q7JV70</id>
    </interactant>
    <interactant intactId="EBI-172533">
        <id>Q7JV70</id>
        <label>Arc2</label>
    </interactant>
    <organismsDiffer>false</organismsDiffer>
    <experiments>4</experiments>
</comment>
<comment type="subcellular location">
    <subcellularLocation>
        <location evidence="3">Extracellular vesicle membrane</location>
    </subcellularLocation>
    <text evidence="3">Forms virion-like extracellular vesicles.</text>
</comment>
<comment type="domain">
    <text evidence="2">The protein is evolutionarily related to retrotransposon Gag proteins. It contains structural elements found within viral Gag polyproteins originated from the Ty3/gypsy retrotransposon family and retains the ability to form virion-like capsid structures that can mediate mRNA transfer between cells. Tetrapod and fly Arc protein-coding genes originated independently from distinct lineages of Ty3/gypsy retrotransposons.</text>
</comment>
<comment type="similarity">
    <text evidence="5">Belongs to the ARC/ARG3.1 family.</text>
</comment>
<evidence type="ECO:0000250" key="1">
    <source>
        <dbReference type="UniProtKB" id="Q63053"/>
    </source>
</evidence>
<evidence type="ECO:0000250" key="2">
    <source>
        <dbReference type="UniProtKB" id="Q7K1U0"/>
    </source>
</evidence>
<evidence type="ECO:0000269" key="3">
    <source>
    </source>
</evidence>
<evidence type="ECO:0000303" key="4">
    <source>
    </source>
</evidence>
<evidence type="ECO:0000305" key="5"/>
<evidence type="ECO:0000312" key="6">
    <source>
        <dbReference type="FlyBase" id="FBgn0033928"/>
    </source>
</evidence>
<evidence type="ECO:0007829" key="7">
    <source>
        <dbReference type="PDB" id="6SIB"/>
    </source>
</evidence>
<evidence type="ECO:0007829" key="8">
    <source>
        <dbReference type="PDB" id="6SIE"/>
    </source>
</evidence>
<name>ARC2_DROME</name>
<gene>
    <name evidence="4 6" type="primary">Arc2</name>
    <name evidence="6" type="ORF">CG13941</name>
</gene>
<reference key="1">
    <citation type="journal article" date="2000" name="Science">
        <title>The genome sequence of Drosophila melanogaster.</title>
        <authorList>
            <person name="Adams M.D."/>
            <person name="Celniker S.E."/>
            <person name="Holt R.A."/>
            <person name="Evans C.A."/>
            <person name="Gocayne J.D."/>
            <person name="Amanatides P.G."/>
            <person name="Scherer S.E."/>
            <person name="Li P.W."/>
            <person name="Hoskins R.A."/>
            <person name="Galle R.F."/>
            <person name="George R.A."/>
            <person name="Lewis S.E."/>
            <person name="Richards S."/>
            <person name="Ashburner M."/>
            <person name="Henderson S.N."/>
            <person name="Sutton G.G."/>
            <person name="Wortman J.R."/>
            <person name="Yandell M.D."/>
            <person name="Zhang Q."/>
            <person name="Chen L.X."/>
            <person name="Brandon R.C."/>
            <person name="Rogers Y.-H.C."/>
            <person name="Blazej R.G."/>
            <person name="Champe M."/>
            <person name="Pfeiffer B.D."/>
            <person name="Wan K.H."/>
            <person name="Doyle C."/>
            <person name="Baxter E.G."/>
            <person name="Helt G."/>
            <person name="Nelson C.R."/>
            <person name="Miklos G.L.G."/>
            <person name="Abril J.F."/>
            <person name="Agbayani A."/>
            <person name="An H.-J."/>
            <person name="Andrews-Pfannkoch C."/>
            <person name="Baldwin D."/>
            <person name="Ballew R.M."/>
            <person name="Basu A."/>
            <person name="Baxendale J."/>
            <person name="Bayraktaroglu L."/>
            <person name="Beasley E.M."/>
            <person name="Beeson K.Y."/>
            <person name="Benos P.V."/>
            <person name="Berman B.P."/>
            <person name="Bhandari D."/>
            <person name="Bolshakov S."/>
            <person name="Borkova D."/>
            <person name="Botchan M.R."/>
            <person name="Bouck J."/>
            <person name="Brokstein P."/>
            <person name="Brottier P."/>
            <person name="Burtis K.C."/>
            <person name="Busam D.A."/>
            <person name="Butler H."/>
            <person name="Cadieu E."/>
            <person name="Center A."/>
            <person name="Chandra I."/>
            <person name="Cherry J.M."/>
            <person name="Cawley S."/>
            <person name="Dahlke C."/>
            <person name="Davenport L.B."/>
            <person name="Davies P."/>
            <person name="de Pablos B."/>
            <person name="Delcher A."/>
            <person name="Deng Z."/>
            <person name="Mays A.D."/>
            <person name="Dew I."/>
            <person name="Dietz S.M."/>
            <person name="Dodson K."/>
            <person name="Doup L.E."/>
            <person name="Downes M."/>
            <person name="Dugan-Rocha S."/>
            <person name="Dunkov B.C."/>
            <person name="Dunn P."/>
            <person name="Durbin K.J."/>
            <person name="Evangelista C.C."/>
            <person name="Ferraz C."/>
            <person name="Ferriera S."/>
            <person name="Fleischmann W."/>
            <person name="Fosler C."/>
            <person name="Gabrielian A.E."/>
            <person name="Garg N.S."/>
            <person name="Gelbart W.M."/>
            <person name="Glasser K."/>
            <person name="Glodek A."/>
            <person name="Gong F."/>
            <person name="Gorrell J.H."/>
            <person name="Gu Z."/>
            <person name="Guan P."/>
            <person name="Harris M."/>
            <person name="Harris N.L."/>
            <person name="Harvey D.A."/>
            <person name="Heiman T.J."/>
            <person name="Hernandez J.R."/>
            <person name="Houck J."/>
            <person name="Hostin D."/>
            <person name="Houston K.A."/>
            <person name="Howland T.J."/>
            <person name="Wei M.-H."/>
            <person name="Ibegwam C."/>
            <person name="Jalali M."/>
            <person name="Kalush F."/>
            <person name="Karpen G.H."/>
            <person name="Ke Z."/>
            <person name="Kennison J.A."/>
            <person name="Ketchum K.A."/>
            <person name="Kimmel B.E."/>
            <person name="Kodira C.D."/>
            <person name="Kraft C.L."/>
            <person name="Kravitz S."/>
            <person name="Kulp D."/>
            <person name="Lai Z."/>
            <person name="Lasko P."/>
            <person name="Lei Y."/>
            <person name="Levitsky A.A."/>
            <person name="Li J.H."/>
            <person name="Li Z."/>
            <person name="Liang Y."/>
            <person name="Lin X."/>
            <person name="Liu X."/>
            <person name="Mattei B."/>
            <person name="McIntosh T.C."/>
            <person name="McLeod M.P."/>
            <person name="McPherson D."/>
            <person name="Merkulov G."/>
            <person name="Milshina N.V."/>
            <person name="Mobarry C."/>
            <person name="Morris J."/>
            <person name="Moshrefi A."/>
            <person name="Mount S.M."/>
            <person name="Moy M."/>
            <person name="Murphy B."/>
            <person name="Murphy L."/>
            <person name="Muzny D.M."/>
            <person name="Nelson D.L."/>
            <person name="Nelson D.R."/>
            <person name="Nelson K.A."/>
            <person name="Nixon K."/>
            <person name="Nusskern D.R."/>
            <person name="Pacleb J.M."/>
            <person name="Palazzolo M."/>
            <person name="Pittman G.S."/>
            <person name="Pan S."/>
            <person name="Pollard J."/>
            <person name="Puri V."/>
            <person name="Reese M.G."/>
            <person name="Reinert K."/>
            <person name="Remington K."/>
            <person name="Saunders R.D.C."/>
            <person name="Scheeler F."/>
            <person name="Shen H."/>
            <person name="Shue B.C."/>
            <person name="Siden-Kiamos I."/>
            <person name="Simpson M."/>
            <person name="Skupski M.P."/>
            <person name="Smith T.J."/>
            <person name="Spier E."/>
            <person name="Spradling A.C."/>
            <person name="Stapleton M."/>
            <person name="Strong R."/>
            <person name="Sun E."/>
            <person name="Svirskas R."/>
            <person name="Tector C."/>
            <person name="Turner R."/>
            <person name="Venter E."/>
            <person name="Wang A.H."/>
            <person name="Wang X."/>
            <person name="Wang Z.-Y."/>
            <person name="Wassarman D.A."/>
            <person name="Weinstock G.M."/>
            <person name="Weissenbach J."/>
            <person name="Williams S.M."/>
            <person name="Woodage T."/>
            <person name="Worley K.C."/>
            <person name="Wu D."/>
            <person name="Yang S."/>
            <person name="Yao Q.A."/>
            <person name="Ye J."/>
            <person name="Yeh R.-F."/>
            <person name="Zaveri J.S."/>
            <person name="Zhan M."/>
            <person name="Zhang G."/>
            <person name="Zhao Q."/>
            <person name="Zheng L."/>
            <person name="Zheng X.H."/>
            <person name="Zhong F.N."/>
            <person name="Zhong W."/>
            <person name="Zhou X."/>
            <person name="Zhu S.C."/>
            <person name="Zhu X."/>
            <person name="Smith H.O."/>
            <person name="Gibbs R.A."/>
            <person name="Myers E.W."/>
            <person name="Rubin G.M."/>
            <person name="Venter J.C."/>
        </authorList>
    </citation>
    <scope>NUCLEOTIDE SEQUENCE [LARGE SCALE GENOMIC DNA]</scope>
    <source>
        <strain>Berkeley</strain>
    </source>
</reference>
<reference key="2">
    <citation type="journal article" date="2002" name="Genome Biol.">
        <title>Annotation of the Drosophila melanogaster euchromatic genome: a systematic review.</title>
        <authorList>
            <person name="Misra S."/>
            <person name="Crosby M.A."/>
            <person name="Mungall C.J."/>
            <person name="Matthews B.B."/>
            <person name="Campbell K.S."/>
            <person name="Hradecky P."/>
            <person name="Huang Y."/>
            <person name="Kaminker J.S."/>
            <person name="Millburn G.H."/>
            <person name="Prochnik S.E."/>
            <person name="Smith C.D."/>
            <person name="Tupy J.L."/>
            <person name="Whitfield E.J."/>
            <person name="Bayraktaroglu L."/>
            <person name="Berman B.P."/>
            <person name="Bettencourt B.R."/>
            <person name="Celniker S.E."/>
            <person name="de Grey A.D.N.J."/>
            <person name="Drysdale R.A."/>
            <person name="Harris N.L."/>
            <person name="Richter J."/>
            <person name="Russo S."/>
            <person name="Schroeder A.J."/>
            <person name="Shu S.Q."/>
            <person name="Stapleton M."/>
            <person name="Yamada C."/>
            <person name="Ashburner M."/>
            <person name="Gelbart W.M."/>
            <person name="Rubin G.M."/>
            <person name="Lewis S.E."/>
        </authorList>
    </citation>
    <scope>GENOME REANNOTATION</scope>
    <source>
        <strain>Berkeley</strain>
    </source>
</reference>
<reference key="3">
    <citation type="submission" date="2006-09" db="EMBL/GenBank/DDBJ databases">
        <authorList>
            <person name="Celniker S."/>
            <person name="Carlson J."/>
            <person name="Wan K."/>
            <person name="Pfeiffer B."/>
            <person name="Frise E."/>
            <person name="George R."/>
            <person name="Hoskins R."/>
            <person name="Stapleton M."/>
            <person name="Pacleb J."/>
            <person name="Park S."/>
            <person name="Svirskas R."/>
            <person name="Smith E."/>
            <person name="Yu C."/>
            <person name="Rubin G."/>
        </authorList>
    </citation>
    <scope>NUCLEOTIDE SEQUENCE [LARGE SCALE MRNA]</scope>
    <source>
        <strain>Berkeley</strain>
        <tissue>Embryo</tissue>
    </source>
</reference>
<reference key="4">
    <citation type="journal article" date="2018" name="Cell">
        <title>Retrovirus-like Gag protein Arc1 binds RNA and traffics across synaptic boutons.</title>
        <authorList>
            <person name="Ashley J."/>
            <person name="Cordy B."/>
            <person name="Lucia D."/>
            <person name="Fradkin L.G."/>
            <person name="Budnik V."/>
            <person name="Thomson T."/>
        </authorList>
    </citation>
    <scope>SUBCELLULAR LOCATION</scope>
</reference>
<keyword id="KW-0002">3D-structure</keyword>
<keyword id="KW-0472">Membrane</keyword>
<keyword id="KW-1185">Reference proteome</keyword>
<keyword id="KW-0694">RNA-binding</keyword>
<keyword id="KW-0813">Transport</keyword>
<organism>
    <name type="scientific">Drosophila melanogaster</name>
    <name type="common">Fruit fly</name>
    <dbReference type="NCBI Taxonomy" id="7227"/>
    <lineage>
        <taxon>Eukaryota</taxon>
        <taxon>Metazoa</taxon>
        <taxon>Ecdysozoa</taxon>
        <taxon>Arthropoda</taxon>
        <taxon>Hexapoda</taxon>
        <taxon>Insecta</taxon>
        <taxon>Pterygota</taxon>
        <taxon>Neoptera</taxon>
        <taxon>Endopterygota</taxon>
        <taxon>Diptera</taxon>
        <taxon>Brachycera</taxon>
        <taxon>Muscomorpha</taxon>
        <taxon>Ephydroidea</taxon>
        <taxon>Drosophilidae</taxon>
        <taxon>Drosophila</taxon>
        <taxon>Sophophora</taxon>
    </lineage>
</organism>
<feature type="chain" id="PRO_0000443802" description="Activity-regulated cytoskeleton associated protein 2">
    <location>
        <begin position="1"/>
        <end position="193"/>
    </location>
</feature>
<feature type="helix" evidence="7">
    <location>
        <begin position="47"/>
        <end position="61"/>
    </location>
</feature>
<feature type="helix" evidence="7">
    <location>
        <begin position="66"/>
        <end position="90"/>
    </location>
</feature>
<feature type="helix" evidence="7">
    <location>
        <begin position="95"/>
        <end position="105"/>
    </location>
</feature>
<feature type="helix" evidence="8">
    <location>
        <begin position="112"/>
        <end position="121"/>
    </location>
</feature>
<feature type="helix" evidence="8">
    <location>
        <begin position="130"/>
        <end position="143"/>
    </location>
</feature>
<feature type="helix" evidence="8">
    <location>
        <begin position="151"/>
        <end position="159"/>
    </location>
</feature>
<feature type="helix" evidence="8">
    <location>
        <begin position="164"/>
        <end position="169"/>
    </location>
</feature>
<feature type="helix" evidence="8">
    <location>
        <begin position="172"/>
        <end position="174"/>
    </location>
</feature>
<feature type="helix" evidence="8">
    <location>
        <begin position="178"/>
        <end position="190"/>
    </location>
</feature>
<sequence>MTQMSDEQFRIFIETIKSLGPIKEEPPSKGSFSNCTVRFSGQRDHDAVDEFINAVETYKEVEGISDKDALKGLPLLFKSIAVVWWKGVRRDAKTWSDALQLLRDHFSPTKPSYQIYMEIFETKQSYDEVIDSFICKQRALLAKLPEGRHDEETELDFIYGLMQPKYRESIPRHEVKTFRELLDRGRTVERTRH</sequence>
<protein>
    <recommendedName>
        <fullName evidence="4">Activity-regulated cytoskeleton associated protein 2</fullName>
        <shortName evidence="4">dArc2</shortName>
    </recommendedName>
</protein>
<proteinExistence type="evidence at protein level"/>
<dbReference type="EMBL" id="AE013599">
    <property type="protein sequence ID" value="AAF58254.1"/>
    <property type="molecule type" value="Genomic_DNA"/>
</dbReference>
<dbReference type="EMBL" id="AY119191">
    <property type="protein sequence ID" value="AAM51051.1"/>
    <property type="molecule type" value="mRNA"/>
</dbReference>
<dbReference type="RefSeq" id="NP_610956.1">
    <property type="nucleotide sequence ID" value="NM_137112.2"/>
</dbReference>
<dbReference type="PDB" id="6SIB">
    <property type="method" value="X-ray"/>
    <property type="resolution" value="1.90 A"/>
    <property type="chains" value="A=38-109"/>
</dbReference>
<dbReference type="PDB" id="6SIE">
    <property type="method" value="X-ray"/>
    <property type="resolution" value="2.80 A"/>
    <property type="chains" value="A/B/C/D=110-193"/>
</dbReference>
<dbReference type="PDB" id="6TAQ">
    <property type="method" value="EM"/>
    <property type="resolution" value="3.90 A"/>
    <property type="chains" value="A/B/C/D=1-193"/>
</dbReference>
<dbReference type="PDB" id="6TAT">
    <property type="method" value="EM"/>
    <property type="resolution" value="3.70 A"/>
    <property type="chains" value="A/B/C/D/E=1-193"/>
</dbReference>
<dbReference type="PDB" id="6TAU">
    <property type="method" value="EM"/>
    <property type="resolution" value="3.70 A"/>
    <property type="chains" value="A/B/C/D/E/F=1-193"/>
</dbReference>
<dbReference type="PDBsum" id="6SIB"/>
<dbReference type="PDBsum" id="6SIE"/>
<dbReference type="PDBsum" id="6TAQ"/>
<dbReference type="PDBsum" id="6TAT"/>
<dbReference type="PDBsum" id="6TAU"/>
<dbReference type="EMDB" id="EMD-10424"/>
<dbReference type="EMDB" id="EMD-10427"/>
<dbReference type="EMDB" id="EMD-10428"/>
<dbReference type="SMR" id="Q7JV70"/>
<dbReference type="IntAct" id="Q7JV70">
    <property type="interactions" value="4"/>
</dbReference>
<dbReference type="STRING" id="7227.FBpp0086675"/>
<dbReference type="PaxDb" id="7227-FBpp0086675"/>
<dbReference type="DNASU" id="36597"/>
<dbReference type="EnsemblMetazoa" id="FBtr0087547">
    <property type="protein sequence ID" value="FBpp0086675"/>
    <property type="gene ID" value="FBgn0033928"/>
</dbReference>
<dbReference type="GeneID" id="36597"/>
<dbReference type="KEGG" id="dme:Dmel_CG13941"/>
<dbReference type="UCSC" id="CG13941-RA">
    <property type="organism name" value="d. melanogaster"/>
</dbReference>
<dbReference type="AGR" id="FB:FBgn0033928"/>
<dbReference type="CTD" id="36597"/>
<dbReference type="FlyBase" id="FBgn0033928">
    <property type="gene designation" value="Arc2"/>
</dbReference>
<dbReference type="VEuPathDB" id="VectorBase:FBgn0033928"/>
<dbReference type="eggNOG" id="ENOG502SQYT">
    <property type="taxonomic scope" value="Eukaryota"/>
</dbReference>
<dbReference type="GeneTree" id="ENSGT00540000073579"/>
<dbReference type="HOGENOM" id="CLU_097305_0_0_1"/>
<dbReference type="InParanoid" id="Q7JV70"/>
<dbReference type="OMA" id="YMEIFET"/>
<dbReference type="OrthoDB" id="425619at2759"/>
<dbReference type="PhylomeDB" id="Q7JV70"/>
<dbReference type="BioGRID-ORCS" id="36597">
    <property type="hits" value="0 hits in 1 CRISPR screen"/>
</dbReference>
<dbReference type="GenomeRNAi" id="36597"/>
<dbReference type="PRO" id="PR:Q7JV70"/>
<dbReference type="Proteomes" id="UP000000803">
    <property type="component" value="Chromosome 2R"/>
</dbReference>
<dbReference type="Bgee" id="FBgn0033928">
    <property type="expression patterns" value="Expressed in adult tracheocyte (Drosophila) in open tracheal system trachea and 98 other cell types or tissues"/>
</dbReference>
<dbReference type="GO" id="GO:1903561">
    <property type="term" value="C:extracellular vesicle"/>
    <property type="evidence" value="ECO:0000314"/>
    <property type="project" value="UniProtKB"/>
</dbReference>
<dbReference type="GO" id="GO:0016020">
    <property type="term" value="C:membrane"/>
    <property type="evidence" value="ECO:0007669"/>
    <property type="project" value="UniProtKB-KW"/>
</dbReference>
<dbReference type="GO" id="GO:0170047">
    <property type="term" value="C:virus-like capsid"/>
    <property type="evidence" value="ECO:0000314"/>
    <property type="project" value="FlyBase"/>
</dbReference>
<dbReference type="GO" id="GO:0042802">
    <property type="term" value="F:identical protein binding"/>
    <property type="evidence" value="ECO:0000353"/>
    <property type="project" value="IntAct"/>
</dbReference>
<dbReference type="GO" id="GO:0003723">
    <property type="term" value="F:RNA binding"/>
    <property type="evidence" value="ECO:0007669"/>
    <property type="project" value="UniProtKB-KW"/>
</dbReference>
<dbReference type="GO" id="GO:0005198">
    <property type="term" value="F:structural molecule activity"/>
    <property type="evidence" value="ECO:0000314"/>
    <property type="project" value="FlyBase"/>
</dbReference>
<dbReference type="InterPro" id="IPR045358">
    <property type="entry name" value="Ty3_capsid"/>
</dbReference>
<dbReference type="Pfam" id="PF19259">
    <property type="entry name" value="Ty3_capsid"/>
    <property type="match status" value="1"/>
</dbReference>